<gene>
    <name evidence="1" type="primary">argS</name>
    <name type="ordered locus">AnaeK_2343</name>
</gene>
<keyword id="KW-0030">Aminoacyl-tRNA synthetase</keyword>
<keyword id="KW-0067">ATP-binding</keyword>
<keyword id="KW-0963">Cytoplasm</keyword>
<keyword id="KW-0436">Ligase</keyword>
<keyword id="KW-0547">Nucleotide-binding</keyword>
<keyword id="KW-0648">Protein biosynthesis</keyword>
<protein>
    <recommendedName>
        <fullName evidence="1">Arginine--tRNA ligase</fullName>
        <ecNumber evidence="1">6.1.1.19</ecNumber>
    </recommendedName>
    <alternativeName>
        <fullName evidence="1">Arginyl-tRNA synthetase</fullName>
        <shortName evidence="1">ArgRS</shortName>
    </alternativeName>
</protein>
<name>SYR_ANASK</name>
<organism>
    <name type="scientific">Anaeromyxobacter sp. (strain K)</name>
    <dbReference type="NCBI Taxonomy" id="447217"/>
    <lineage>
        <taxon>Bacteria</taxon>
        <taxon>Pseudomonadati</taxon>
        <taxon>Myxococcota</taxon>
        <taxon>Myxococcia</taxon>
        <taxon>Myxococcales</taxon>
        <taxon>Cystobacterineae</taxon>
        <taxon>Anaeromyxobacteraceae</taxon>
        <taxon>Anaeromyxobacter</taxon>
    </lineage>
</organism>
<comment type="catalytic activity">
    <reaction evidence="1">
        <text>tRNA(Arg) + L-arginine + ATP = L-arginyl-tRNA(Arg) + AMP + diphosphate</text>
        <dbReference type="Rhea" id="RHEA:20301"/>
        <dbReference type="Rhea" id="RHEA-COMP:9658"/>
        <dbReference type="Rhea" id="RHEA-COMP:9673"/>
        <dbReference type="ChEBI" id="CHEBI:30616"/>
        <dbReference type="ChEBI" id="CHEBI:32682"/>
        <dbReference type="ChEBI" id="CHEBI:33019"/>
        <dbReference type="ChEBI" id="CHEBI:78442"/>
        <dbReference type="ChEBI" id="CHEBI:78513"/>
        <dbReference type="ChEBI" id="CHEBI:456215"/>
        <dbReference type="EC" id="6.1.1.19"/>
    </reaction>
</comment>
<comment type="subunit">
    <text evidence="1">Monomer.</text>
</comment>
<comment type="subcellular location">
    <subcellularLocation>
        <location evidence="1">Cytoplasm</location>
    </subcellularLocation>
</comment>
<comment type="similarity">
    <text evidence="1">Belongs to the class-I aminoacyl-tRNA synthetase family.</text>
</comment>
<evidence type="ECO:0000255" key="1">
    <source>
        <dbReference type="HAMAP-Rule" id="MF_00123"/>
    </source>
</evidence>
<evidence type="ECO:0000256" key="2">
    <source>
        <dbReference type="SAM" id="MobiDB-lite"/>
    </source>
</evidence>
<dbReference type="EC" id="6.1.1.19" evidence="1"/>
<dbReference type="EMBL" id="CP001131">
    <property type="protein sequence ID" value="ACG73570.1"/>
    <property type="molecule type" value="Genomic_DNA"/>
</dbReference>
<dbReference type="RefSeq" id="WP_012526361.1">
    <property type="nucleotide sequence ID" value="NC_011145.1"/>
</dbReference>
<dbReference type="SMR" id="B4UEJ9"/>
<dbReference type="KEGG" id="ank:AnaeK_2343"/>
<dbReference type="HOGENOM" id="CLU_006406_0_1_7"/>
<dbReference type="OrthoDB" id="9803211at2"/>
<dbReference type="Proteomes" id="UP000001871">
    <property type="component" value="Chromosome"/>
</dbReference>
<dbReference type="GO" id="GO:0005737">
    <property type="term" value="C:cytoplasm"/>
    <property type="evidence" value="ECO:0007669"/>
    <property type="project" value="UniProtKB-SubCell"/>
</dbReference>
<dbReference type="GO" id="GO:0004814">
    <property type="term" value="F:arginine-tRNA ligase activity"/>
    <property type="evidence" value="ECO:0007669"/>
    <property type="project" value="UniProtKB-UniRule"/>
</dbReference>
<dbReference type="GO" id="GO:0005524">
    <property type="term" value="F:ATP binding"/>
    <property type="evidence" value="ECO:0007669"/>
    <property type="project" value="UniProtKB-UniRule"/>
</dbReference>
<dbReference type="GO" id="GO:0006420">
    <property type="term" value="P:arginyl-tRNA aminoacylation"/>
    <property type="evidence" value="ECO:0007669"/>
    <property type="project" value="UniProtKB-UniRule"/>
</dbReference>
<dbReference type="CDD" id="cd00671">
    <property type="entry name" value="ArgRS_core"/>
    <property type="match status" value="1"/>
</dbReference>
<dbReference type="FunFam" id="1.10.730.10:FF:000008">
    <property type="entry name" value="Arginine--tRNA ligase"/>
    <property type="match status" value="1"/>
</dbReference>
<dbReference type="Gene3D" id="3.30.1360.70">
    <property type="entry name" value="Arginyl tRNA synthetase N-terminal domain"/>
    <property type="match status" value="1"/>
</dbReference>
<dbReference type="Gene3D" id="3.40.50.620">
    <property type="entry name" value="HUPs"/>
    <property type="match status" value="1"/>
</dbReference>
<dbReference type="Gene3D" id="1.10.730.10">
    <property type="entry name" value="Isoleucyl-tRNA Synthetase, Domain 1"/>
    <property type="match status" value="1"/>
</dbReference>
<dbReference type="HAMAP" id="MF_00123">
    <property type="entry name" value="Arg_tRNA_synth"/>
    <property type="match status" value="1"/>
</dbReference>
<dbReference type="InterPro" id="IPR001412">
    <property type="entry name" value="aa-tRNA-synth_I_CS"/>
</dbReference>
<dbReference type="InterPro" id="IPR001278">
    <property type="entry name" value="Arg-tRNA-ligase"/>
</dbReference>
<dbReference type="InterPro" id="IPR005148">
    <property type="entry name" value="Arg-tRNA-synth_N"/>
</dbReference>
<dbReference type="InterPro" id="IPR036695">
    <property type="entry name" value="Arg-tRNA-synth_N_sf"/>
</dbReference>
<dbReference type="InterPro" id="IPR035684">
    <property type="entry name" value="ArgRS_core"/>
</dbReference>
<dbReference type="InterPro" id="IPR008909">
    <property type="entry name" value="DALR_anticod-bd"/>
</dbReference>
<dbReference type="InterPro" id="IPR014729">
    <property type="entry name" value="Rossmann-like_a/b/a_fold"/>
</dbReference>
<dbReference type="InterPro" id="IPR009080">
    <property type="entry name" value="tRNAsynth_Ia_anticodon-bd"/>
</dbReference>
<dbReference type="PANTHER" id="PTHR11956:SF5">
    <property type="entry name" value="ARGININE--TRNA LIGASE, CYTOPLASMIC"/>
    <property type="match status" value="1"/>
</dbReference>
<dbReference type="PANTHER" id="PTHR11956">
    <property type="entry name" value="ARGINYL-TRNA SYNTHETASE"/>
    <property type="match status" value="1"/>
</dbReference>
<dbReference type="Pfam" id="PF03485">
    <property type="entry name" value="Arg_tRNA_synt_N"/>
    <property type="match status" value="1"/>
</dbReference>
<dbReference type="Pfam" id="PF05746">
    <property type="entry name" value="DALR_1"/>
    <property type="match status" value="1"/>
</dbReference>
<dbReference type="Pfam" id="PF00750">
    <property type="entry name" value="tRNA-synt_1d"/>
    <property type="match status" value="1"/>
</dbReference>
<dbReference type="PRINTS" id="PR01038">
    <property type="entry name" value="TRNASYNTHARG"/>
</dbReference>
<dbReference type="SMART" id="SM01016">
    <property type="entry name" value="Arg_tRNA_synt_N"/>
    <property type="match status" value="1"/>
</dbReference>
<dbReference type="SMART" id="SM00836">
    <property type="entry name" value="DALR_1"/>
    <property type="match status" value="1"/>
</dbReference>
<dbReference type="SUPFAM" id="SSF47323">
    <property type="entry name" value="Anticodon-binding domain of a subclass of class I aminoacyl-tRNA synthetases"/>
    <property type="match status" value="1"/>
</dbReference>
<dbReference type="SUPFAM" id="SSF55190">
    <property type="entry name" value="Arginyl-tRNA synthetase (ArgRS), N-terminal 'additional' domain"/>
    <property type="match status" value="1"/>
</dbReference>
<dbReference type="SUPFAM" id="SSF52374">
    <property type="entry name" value="Nucleotidylyl transferase"/>
    <property type="match status" value="1"/>
</dbReference>
<dbReference type="PROSITE" id="PS00178">
    <property type="entry name" value="AA_TRNA_LIGASE_I"/>
    <property type="match status" value="1"/>
</dbReference>
<sequence length="598" mass="65493">MVRDRVIELFRKALAQGADDGRWPAAGAGFSVEAPRDPKHGDFAVNAAMVLAKQAGRPPRELAQAIVEAVRAADTAGDLAGLEIAGPGFINVRLSPDLWLRTLARAVAEGPDYGRTAVGQGKKVIVEYVSANPTGPMHVGHGRNAVVGDGVQGLLRWAGFDVTREYYVNDYGAQVQTLARSVHLRYQELHGRTVTMPPKSYPGEYVKDIAAGLKAEYGARFLDAPEAEWLTLFRDHAVQHVLGMIRGDLAAVNISFDRWSSEKALYESGTVDRFLRFLEEKDLVYVGKLPPPKSKKGQPPAQPQPDEEGVTAAEDLTLFRSSAYGDEVDRPVKKADGTPTYFCADIAYHWDKRQRADALVDVLGADHGGYVPRLEAAMEALGASRKDLHVVLIQMVSLMRGGESVKMSKRAGTLVSLREVVDEVGRDATRFIFLTRRSDAPLDFDVELAKRQTLDNPVFYVQYGHARLAAIFQKAREAGHAVPDFDLEAARTLASPEEQDLIRRIAAFPDMLAAAALAYEPHRVAFYLQETIAAFHSWYTQGKKSGEKVIGPDPVKTAARLFLCRALKQVLANGLAVLGVSAPDRMESPETRDIADDV</sequence>
<feature type="chain" id="PRO_1000095333" description="Arginine--tRNA ligase">
    <location>
        <begin position="1"/>
        <end position="598"/>
    </location>
</feature>
<feature type="region of interest" description="Disordered" evidence="2">
    <location>
        <begin position="288"/>
        <end position="308"/>
    </location>
</feature>
<feature type="short sequence motif" description="'HIGH' region">
    <location>
        <begin position="131"/>
        <end position="141"/>
    </location>
</feature>
<proteinExistence type="inferred from homology"/>
<reference key="1">
    <citation type="submission" date="2008-08" db="EMBL/GenBank/DDBJ databases">
        <title>Complete sequence of Anaeromyxobacter sp. K.</title>
        <authorList>
            <consortium name="US DOE Joint Genome Institute"/>
            <person name="Lucas S."/>
            <person name="Copeland A."/>
            <person name="Lapidus A."/>
            <person name="Glavina del Rio T."/>
            <person name="Dalin E."/>
            <person name="Tice H."/>
            <person name="Bruce D."/>
            <person name="Goodwin L."/>
            <person name="Pitluck S."/>
            <person name="Saunders E."/>
            <person name="Brettin T."/>
            <person name="Detter J.C."/>
            <person name="Han C."/>
            <person name="Larimer F."/>
            <person name="Land M."/>
            <person name="Hauser L."/>
            <person name="Kyrpides N."/>
            <person name="Ovchinnikiva G."/>
            <person name="Beliaev A."/>
        </authorList>
    </citation>
    <scope>NUCLEOTIDE SEQUENCE [LARGE SCALE GENOMIC DNA]</scope>
    <source>
        <strain>K</strain>
    </source>
</reference>
<accession>B4UEJ9</accession>